<feature type="chain" id="PRO_0000205431" description="GTP-binding protein 1">
    <location>
        <begin position="1"/>
        <end position="363"/>
    </location>
</feature>
<feature type="domain" description="OBG-type G" evidence="1">
    <location>
        <begin position="63"/>
        <end position="287"/>
    </location>
</feature>
<feature type="domain" description="TGS" evidence="2">
    <location>
        <begin position="287"/>
        <end position="362"/>
    </location>
</feature>
<feature type="binding site" evidence="1">
    <location>
        <begin position="69"/>
        <end position="76"/>
    </location>
    <ligand>
        <name>GTP</name>
        <dbReference type="ChEBI" id="CHEBI:37565"/>
    </ligand>
</feature>
<feature type="binding site" evidence="1">
    <location>
        <begin position="115"/>
        <end position="119"/>
    </location>
    <ligand>
        <name>GTP</name>
        <dbReference type="ChEBI" id="CHEBI:37565"/>
    </ligand>
</feature>
<feature type="binding site" evidence="1">
    <location>
        <begin position="246"/>
        <end position="249"/>
    </location>
    <ligand>
        <name>GTP</name>
        <dbReference type="ChEBI" id="CHEBI:37565"/>
    </ligand>
</feature>
<feature type="sequence conflict" description="In Ref. 1; AAA35308." evidence="3" ref="1">
    <original>LDATKAADQRE</original>
    <variation>FGCYKKLPISEK</variation>
    <location>
        <begin position="146"/>
        <end position="156"/>
    </location>
</feature>
<feature type="sequence conflict" description="In Ref. 1; AAA35308." evidence="3" ref="1">
    <original>VR</original>
    <variation>IH</variation>
    <location>
        <begin position="308"/>
        <end position="309"/>
    </location>
</feature>
<accession>P32235</accession>
<accession>O43016</accession>
<accession>O59756</accession>
<evidence type="ECO:0000255" key="1">
    <source>
        <dbReference type="PROSITE-ProRule" id="PRU01047"/>
    </source>
</evidence>
<evidence type="ECO:0000255" key="2">
    <source>
        <dbReference type="PROSITE-ProRule" id="PRU01228"/>
    </source>
</evidence>
<evidence type="ECO:0000305" key="3"/>
<proteinExistence type="inferred from homology"/>
<comment type="similarity">
    <text evidence="1">Belongs to the TRAFAC class OBG-HflX-like GTPase superfamily. OBG GTPase family.</text>
</comment>
<dbReference type="EMBL" id="L00671">
    <property type="protein sequence ID" value="AAA35308.1"/>
    <property type="molecule type" value="Genomic_DNA"/>
</dbReference>
<dbReference type="EMBL" id="CU329671">
    <property type="protein sequence ID" value="CAA19048.3"/>
    <property type="molecule type" value="Genomic_DNA"/>
</dbReference>
<dbReference type="PIR" id="JT0741">
    <property type="entry name" value="JT0741"/>
</dbReference>
<dbReference type="PIR" id="T40281">
    <property type="entry name" value="T40281"/>
</dbReference>
<dbReference type="PIR" id="T40599">
    <property type="entry name" value="T40599"/>
</dbReference>
<dbReference type="RefSeq" id="NP_595225.2">
    <property type="nucleotide sequence ID" value="NM_001021131.2"/>
</dbReference>
<dbReference type="SMR" id="P32235"/>
<dbReference type="FunCoup" id="P32235">
    <property type="interactions" value="1183"/>
</dbReference>
<dbReference type="STRING" id="284812.P32235"/>
<dbReference type="PaxDb" id="4896-SPBC354.01.1"/>
<dbReference type="EnsemblFungi" id="SPBC354.01.1">
    <property type="protein sequence ID" value="SPBC354.01.1:pep"/>
    <property type="gene ID" value="SPBC354.01"/>
</dbReference>
<dbReference type="GeneID" id="2540303"/>
<dbReference type="KEGG" id="spo:2540303"/>
<dbReference type="PomBase" id="SPBC354.01">
    <property type="gene designation" value="gtp1"/>
</dbReference>
<dbReference type="eggNOG" id="KOG1486">
    <property type="taxonomic scope" value="Eukaryota"/>
</dbReference>
<dbReference type="HOGENOM" id="CLU_044997_0_0_1"/>
<dbReference type="InParanoid" id="P32235"/>
<dbReference type="OMA" id="DVCDQVH"/>
<dbReference type="PhylomeDB" id="P32235"/>
<dbReference type="PRO" id="PR:P32235"/>
<dbReference type="Proteomes" id="UP000002485">
    <property type="component" value="Chromosome II"/>
</dbReference>
<dbReference type="GO" id="GO:0051286">
    <property type="term" value="C:cell tip"/>
    <property type="evidence" value="ECO:0007005"/>
    <property type="project" value="PomBase"/>
</dbReference>
<dbReference type="GO" id="GO:0005737">
    <property type="term" value="C:cytoplasm"/>
    <property type="evidence" value="ECO:0000318"/>
    <property type="project" value="GO_Central"/>
</dbReference>
<dbReference type="GO" id="GO:0005525">
    <property type="term" value="F:GTP binding"/>
    <property type="evidence" value="ECO:0000318"/>
    <property type="project" value="GO_Central"/>
</dbReference>
<dbReference type="GO" id="GO:0003924">
    <property type="term" value="F:GTPase activity"/>
    <property type="evidence" value="ECO:0007669"/>
    <property type="project" value="InterPro"/>
</dbReference>
<dbReference type="GO" id="GO:0002181">
    <property type="term" value="P:cytoplasmic translation"/>
    <property type="evidence" value="ECO:0000318"/>
    <property type="project" value="GO_Central"/>
</dbReference>
<dbReference type="CDD" id="cd01896">
    <property type="entry name" value="DRG"/>
    <property type="match status" value="1"/>
</dbReference>
<dbReference type="FunFam" id="3.10.20.30:FF:000003">
    <property type="entry name" value="Developmentally-regulated GTP-binding protein 1"/>
    <property type="match status" value="1"/>
</dbReference>
<dbReference type="FunFam" id="3.40.50.300:FF:000740">
    <property type="entry name" value="Putative GTP-binding protein 1"/>
    <property type="match status" value="1"/>
</dbReference>
<dbReference type="Gene3D" id="3.10.20.30">
    <property type="match status" value="1"/>
</dbReference>
<dbReference type="Gene3D" id="6.10.140.1070">
    <property type="match status" value="1"/>
</dbReference>
<dbReference type="InterPro" id="IPR012675">
    <property type="entry name" value="Beta-grasp_dom_sf"/>
</dbReference>
<dbReference type="InterPro" id="IPR045001">
    <property type="entry name" value="DRG"/>
</dbReference>
<dbReference type="InterPro" id="IPR031167">
    <property type="entry name" value="G_OBG"/>
</dbReference>
<dbReference type="InterPro" id="IPR006073">
    <property type="entry name" value="GTP-bd"/>
</dbReference>
<dbReference type="InterPro" id="IPR031662">
    <property type="entry name" value="GTP-binding_2"/>
</dbReference>
<dbReference type="InterPro" id="IPR006074">
    <property type="entry name" value="GTP1-OBG_CS"/>
</dbReference>
<dbReference type="InterPro" id="IPR027417">
    <property type="entry name" value="P-loop_NTPase"/>
</dbReference>
<dbReference type="InterPro" id="IPR005225">
    <property type="entry name" value="Small_GTP-bd"/>
</dbReference>
<dbReference type="InterPro" id="IPR004095">
    <property type="entry name" value="TGS"/>
</dbReference>
<dbReference type="InterPro" id="IPR012676">
    <property type="entry name" value="TGS-like"/>
</dbReference>
<dbReference type="NCBIfam" id="TIGR00231">
    <property type="entry name" value="small_GTP"/>
    <property type="match status" value="1"/>
</dbReference>
<dbReference type="PANTHER" id="PTHR43127">
    <property type="entry name" value="DEVELOPMENTALLY-REGULATED GTP-BINDING PROTEIN 2"/>
    <property type="match status" value="1"/>
</dbReference>
<dbReference type="Pfam" id="PF01926">
    <property type="entry name" value="MMR_HSR1"/>
    <property type="match status" value="1"/>
</dbReference>
<dbReference type="Pfam" id="PF16897">
    <property type="entry name" value="MMR_HSR1_Xtn"/>
    <property type="match status" value="1"/>
</dbReference>
<dbReference type="Pfam" id="PF02824">
    <property type="entry name" value="TGS"/>
    <property type="match status" value="1"/>
</dbReference>
<dbReference type="PRINTS" id="PR00326">
    <property type="entry name" value="GTP1OBG"/>
</dbReference>
<dbReference type="SUPFAM" id="SSF52540">
    <property type="entry name" value="P-loop containing nucleoside triphosphate hydrolases"/>
    <property type="match status" value="1"/>
</dbReference>
<dbReference type="SUPFAM" id="SSF81271">
    <property type="entry name" value="TGS-like"/>
    <property type="match status" value="1"/>
</dbReference>
<dbReference type="PROSITE" id="PS51710">
    <property type="entry name" value="G_OBG"/>
    <property type="match status" value="1"/>
</dbReference>
<dbReference type="PROSITE" id="PS00905">
    <property type="entry name" value="GTP1_OBG"/>
    <property type="match status" value="1"/>
</dbReference>
<dbReference type="PROSITE" id="PS51880">
    <property type="entry name" value="TGS"/>
    <property type="match status" value="1"/>
</dbReference>
<gene>
    <name type="primary">gtp1</name>
    <name type="ORF">SPBC354.01</name>
    <name type="ORF">SPBC649.06</name>
</gene>
<reference key="1">
    <citation type="journal article" date="1993" name="Gene">
        <title>Sequence of the Schizosaccharomyces pombe gtp1 gene and identification of a novel family of putative GTP-binding proteins.</title>
        <authorList>
            <person name="Hudson J.D."/>
            <person name="Young P.G."/>
        </authorList>
    </citation>
    <scope>NUCLEOTIDE SEQUENCE [GENOMIC DNA]</scope>
</reference>
<reference key="2">
    <citation type="journal article" date="2002" name="Nature">
        <title>The genome sequence of Schizosaccharomyces pombe.</title>
        <authorList>
            <person name="Wood V."/>
            <person name="Gwilliam R."/>
            <person name="Rajandream M.A."/>
            <person name="Lyne M.H."/>
            <person name="Lyne R."/>
            <person name="Stewart A."/>
            <person name="Sgouros J.G."/>
            <person name="Peat N."/>
            <person name="Hayles J."/>
            <person name="Baker S.G."/>
            <person name="Basham D."/>
            <person name="Bowman S."/>
            <person name="Brooks K."/>
            <person name="Brown D."/>
            <person name="Brown S."/>
            <person name="Chillingworth T."/>
            <person name="Churcher C.M."/>
            <person name="Collins M."/>
            <person name="Connor R."/>
            <person name="Cronin A."/>
            <person name="Davis P."/>
            <person name="Feltwell T."/>
            <person name="Fraser A."/>
            <person name="Gentles S."/>
            <person name="Goble A."/>
            <person name="Hamlin N."/>
            <person name="Harris D.E."/>
            <person name="Hidalgo J."/>
            <person name="Hodgson G."/>
            <person name="Holroyd S."/>
            <person name="Hornsby T."/>
            <person name="Howarth S."/>
            <person name="Huckle E.J."/>
            <person name="Hunt S."/>
            <person name="Jagels K."/>
            <person name="James K.D."/>
            <person name="Jones L."/>
            <person name="Jones M."/>
            <person name="Leather S."/>
            <person name="McDonald S."/>
            <person name="McLean J."/>
            <person name="Mooney P."/>
            <person name="Moule S."/>
            <person name="Mungall K.L."/>
            <person name="Murphy L.D."/>
            <person name="Niblett D."/>
            <person name="Odell C."/>
            <person name="Oliver K."/>
            <person name="O'Neil S."/>
            <person name="Pearson D."/>
            <person name="Quail M.A."/>
            <person name="Rabbinowitsch E."/>
            <person name="Rutherford K.M."/>
            <person name="Rutter S."/>
            <person name="Saunders D."/>
            <person name="Seeger K."/>
            <person name="Sharp S."/>
            <person name="Skelton J."/>
            <person name="Simmonds M.N."/>
            <person name="Squares R."/>
            <person name="Squares S."/>
            <person name="Stevens K."/>
            <person name="Taylor K."/>
            <person name="Taylor R.G."/>
            <person name="Tivey A."/>
            <person name="Walsh S.V."/>
            <person name="Warren T."/>
            <person name="Whitehead S."/>
            <person name="Woodward J.R."/>
            <person name="Volckaert G."/>
            <person name="Aert R."/>
            <person name="Robben J."/>
            <person name="Grymonprez B."/>
            <person name="Weltjens I."/>
            <person name="Vanstreels E."/>
            <person name="Rieger M."/>
            <person name="Schaefer M."/>
            <person name="Mueller-Auer S."/>
            <person name="Gabel C."/>
            <person name="Fuchs M."/>
            <person name="Duesterhoeft A."/>
            <person name="Fritzc C."/>
            <person name="Holzer E."/>
            <person name="Moestl D."/>
            <person name="Hilbert H."/>
            <person name="Borzym K."/>
            <person name="Langer I."/>
            <person name="Beck A."/>
            <person name="Lehrach H."/>
            <person name="Reinhardt R."/>
            <person name="Pohl T.M."/>
            <person name="Eger P."/>
            <person name="Zimmermann W."/>
            <person name="Wedler H."/>
            <person name="Wambutt R."/>
            <person name="Purnelle B."/>
            <person name="Goffeau A."/>
            <person name="Cadieu E."/>
            <person name="Dreano S."/>
            <person name="Gloux S."/>
            <person name="Lelaure V."/>
            <person name="Mottier S."/>
            <person name="Galibert F."/>
            <person name="Aves S.J."/>
            <person name="Xiang Z."/>
            <person name="Hunt C."/>
            <person name="Moore K."/>
            <person name="Hurst S.M."/>
            <person name="Lucas M."/>
            <person name="Rochet M."/>
            <person name="Gaillardin C."/>
            <person name="Tallada V.A."/>
            <person name="Garzon A."/>
            <person name="Thode G."/>
            <person name="Daga R.R."/>
            <person name="Cruzado L."/>
            <person name="Jimenez J."/>
            <person name="Sanchez M."/>
            <person name="del Rey F."/>
            <person name="Benito J."/>
            <person name="Dominguez A."/>
            <person name="Revuelta J.L."/>
            <person name="Moreno S."/>
            <person name="Armstrong J."/>
            <person name="Forsburg S.L."/>
            <person name="Cerutti L."/>
            <person name="Lowe T."/>
            <person name="McCombie W.R."/>
            <person name="Paulsen I."/>
            <person name="Potashkin J."/>
            <person name="Shpakovski G.V."/>
            <person name="Ussery D."/>
            <person name="Barrell B.G."/>
            <person name="Nurse P."/>
        </authorList>
    </citation>
    <scope>NUCLEOTIDE SEQUENCE [LARGE SCALE GENOMIC DNA]</scope>
    <source>
        <strain>972 / ATCC 24843</strain>
    </source>
</reference>
<organism>
    <name type="scientific">Schizosaccharomyces pombe (strain 972 / ATCC 24843)</name>
    <name type="common">Fission yeast</name>
    <dbReference type="NCBI Taxonomy" id="284812"/>
    <lineage>
        <taxon>Eukaryota</taxon>
        <taxon>Fungi</taxon>
        <taxon>Dikarya</taxon>
        <taxon>Ascomycota</taxon>
        <taxon>Taphrinomycotina</taxon>
        <taxon>Schizosaccharomycetes</taxon>
        <taxon>Schizosaccharomycetales</taxon>
        <taxon>Schizosaccharomycetaceae</taxon>
        <taxon>Schizosaccharomyces</taxon>
    </lineage>
</organism>
<sequence length="363" mass="40749">MGVLEKIQEIEAEMRRTQKNKATEYHLGLLKGKLAKLRAQLLEPTSKSGPKGEGFDVLKSGDARVAFIGFPSVGKSTLLSAITKTKSATASYEFTTLTAIPGVLEYDGAEIQMLDLPGIIEGASQGRGGRQAVSAARTADLILMVLDATKAADQREKIEYELEQVGIRLNRQPPNVTLTIKKNGGIKFNHTVPLTHMDYKMAYNILHEYRIHNADILIREDITVDDFIDLVMGNRRYINCLYCYSKIDAVSLEEVDRLARLPKSVVISCNMKLNLDFLKERIWEELNLYRIYTKRKGEMPDFSEALIVRKGSTIEQVCNRIHRTLAEQLKYALVWGTSAKHSPQVVGLNHRVEEGDVVTIVTK</sequence>
<keyword id="KW-0342">GTP-binding</keyword>
<keyword id="KW-0547">Nucleotide-binding</keyword>
<keyword id="KW-1185">Reference proteome</keyword>
<protein>
    <recommendedName>
        <fullName>GTP-binding protein 1</fullName>
    </recommendedName>
</protein>
<name>GTP1_SCHPO</name>